<protein>
    <recommendedName>
        <fullName>RING finger protein 141</fullName>
    </recommendedName>
</protein>
<keyword id="KW-0449">Lipoprotein</keyword>
<keyword id="KW-0472">Membrane</keyword>
<keyword id="KW-0479">Metal-binding</keyword>
<keyword id="KW-0519">Myristate</keyword>
<keyword id="KW-1185">Reference proteome</keyword>
<keyword id="KW-0862">Zinc</keyword>
<keyword id="KW-0863">Zinc-finger</keyword>
<dbReference type="EMBL" id="BC109813">
    <property type="protein sequence ID" value="AAI09814.1"/>
    <property type="molecule type" value="mRNA"/>
</dbReference>
<dbReference type="RefSeq" id="NP_001035656.1">
    <property type="nucleotide sequence ID" value="NM_001040566.1"/>
</dbReference>
<dbReference type="RefSeq" id="XP_005216102.1">
    <property type="nucleotide sequence ID" value="XM_005216045.5"/>
</dbReference>
<dbReference type="BMRB" id="Q32L15"/>
<dbReference type="FunCoup" id="Q32L15">
    <property type="interactions" value="2259"/>
</dbReference>
<dbReference type="STRING" id="9913.ENSBTAP00000021020"/>
<dbReference type="PaxDb" id="9913-ENSBTAP00000021020"/>
<dbReference type="Ensembl" id="ENSBTAT00000021020.6">
    <property type="protein sequence ID" value="ENSBTAP00000021020.4"/>
    <property type="gene ID" value="ENSBTAG00000015824.6"/>
</dbReference>
<dbReference type="GeneID" id="539455"/>
<dbReference type="KEGG" id="bta:539455"/>
<dbReference type="CTD" id="50862"/>
<dbReference type="VEuPathDB" id="HostDB:ENSBTAG00000015824"/>
<dbReference type="VGNC" id="VGNC:34025">
    <property type="gene designation" value="RNF141"/>
</dbReference>
<dbReference type="eggNOG" id="KOG1039">
    <property type="taxonomic scope" value="Eukaryota"/>
</dbReference>
<dbReference type="GeneTree" id="ENSGT00390000003145"/>
<dbReference type="HOGENOM" id="CLU_080007_0_0_1"/>
<dbReference type="InParanoid" id="Q32L15"/>
<dbReference type="OMA" id="RHRNCPV"/>
<dbReference type="OrthoDB" id="1630758at2759"/>
<dbReference type="TreeFam" id="TF323284"/>
<dbReference type="Proteomes" id="UP000009136">
    <property type="component" value="Chromosome 15"/>
</dbReference>
<dbReference type="Bgee" id="ENSBTAG00000015824">
    <property type="expression patterns" value="Expressed in spermatid and 109 other cell types or tissues"/>
</dbReference>
<dbReference type="GO" id="GO:0016020">
    <property type="term" value="C:membrane"/>
    <property type="evidence" value="ECO:0007669"/>
    <property type="project" value="UniProtKB-SubCell"/>
</dbReference>
<dbReference type="GO" id="GO:0004842">
    <property type="term" value="F:ubiquitin-protein transferase activity"/>
    <property type="evidence" value="ECO:0000318"/>
    <property type="project" value="GO_Central"/>
</dbReference>
<dbReference type="GO" id="GO:0008270">
    <property type="term" value="F:zinc ion binding"/>
    <property type="evidence" value="ECO:0007669"/>
    <property type="project" value="UniProtKB-KW"/>
</dbReference>
<dbReference type="GO" id="GO:0051865">
    <property type="term" value="P:protein autoubiquitination"/>
    <property type="evidence" value="ECO:0000318"/>
    <property type="project" value="GO_Central"/>
</dbReference>
<dbReference type="GO" id="GO:0006355">
    <property type="term" value="P:regulation of DNA-templated transcription"/>
    <property type="evidence" value="ECO:0007669"/>
    <property type="project" value="Ensembl"/>
</dbReference>
<dbReference type="CDD" id="cd16545">
    <property type="entry name" value="RING-HC_RNF141"/>
    <property type="match status" value="1"/>
</dbReference>
<dbReference type="FunFam" id="3.30.40.10:FF:000160">
    <property type="entry name" value="Ring finger protein 141"/>
    <property type="match status" value="1"/>
</dbReference>
<dbReference type="Gene3D" id="3.30.40.10">
    <property type="entry name" value="Zinc/RING finger domain, C3HC4 (zinc finger)"/>
    <property type="match status" value="1"/>
</dbReference>
<dbReference type="InterPro" id="IPR043400">
    <property type="entry name" value="RING-HC_RNF141"/>
</dbReference>
<dbReference type="InterPro" id="IPR047126">
    <property type="entry name" value="RNF141-like"/>
</dbReference>
<dbReference type="InterPro" id="IPR001841">
    <property type="entry name" value="Znf_RING"/>
</dbReference>
<dbReference type="InterPro" id="IPR013083">
    <property type="entry name" value="Znf_RING/FYVE/PHD"/>
</dbReference>
<dbReference type="InterPro" id="IPR017907">
    <property type="entry name" value="Znf_RING_CS"/>
</dbReference>
<dbReference type="PANTHER" id="PTHR12109:SF3">
    <property type="entry name" value="RING FINGER PROTEIN 141"/>
    <property type="match status" value="1"/>
</dbReference>
<dbReference type="PANTHER" id="PTHR12109">
    <property type="entry name" value="RING FINGER PROTEIN 141-RELATED"/>
    <property type="match status" value="1"/>
</dbReference>
<dbReference type="Pfam" id="PF13639">
    <property type="entry name" value="zf-RING_2"/>
    <property type="match status" value="1"/>
</dbReference>
<dbReference type="SMART" id="SM00184">
    <property type="entry name" value="RING"/>
    <property type="match status" value="1"/>
</dbReference>
<dbReference type="SUPFAM" id="SSF57850">
    <property type="entry name" value="RING/U-box"/>
    <property type="match status" value="1"/>
</dbReference>
<dbReference type="PROSITE" id="PS00518">
    <property type="entry name" value="ZF_RING_1"/>
    <property type="match status" value="1"/>
</dbReference>
<dbReference type="PROSITE" id="PS50089">
    <property type="entry name" value="ZF_RING_2"/>
    <property type="match status" value="1"/>
</dbReference>
<reference key="1">
    <citation type="submission" date="2005-11" db="EMBL/GenBank/DDBJ databases">
        <authorList>
            <consortium name="NIH - Mammalian Gene Collection (MGC) project"/>
        </authorList>
    </citation>
    <scope>NUCLEOTIDE SEQUENCE [LARGE SCALE MRNA]</scope>
    <source>
        <strain>Crossbred X Angus</strain>
        <tissue>Liver</tissue>
    </source>
</reference>
<organism>
    <name type="scientific">Bos taurus</name>
    <name type="common">Bovine</name>
    <dbReference type="NCBI Taxonomy" id="9913"/>
    <lineage>
        <taxon>Eukaryota</taxon>
        <taxon>Metazoa</taxon>
        <taxon>Chordata</taxon>
        <taxon>Craniata</taxon>
        <taxon>Vertebrata</taxon>
        <taxon>Euteleostomi</taxon>
        <taxon>Mammalia</taxon>
        <taxon>Eutheria</taxon>
        <taxon>Laurasiatheria</taxon>
        <taxon>Artiodactyla</taxon>
        <taxon>Ruminantia</taxon>
        <taxon>Pecora</taxon>
        <taxon>Bovidae</taxon>
        <taxon>Bovinae</taxon>
        <taxon>Bos</taxon>
    </lineage>
</organism>
<accession>Q32L15</accession>
<feature type="initiator methionine" description="Removed" evidence="2">
    <location>
        <position position="1"/>
    </location>
</feature>
<feature type="chain" id="PRO_0000289596" description="RING finger protein 141">
    <location>
        <begin position="2"/>
        <end position="230"/>
    </location>
</feature>
<feature type="zinc finger region" description="RING-type" evidence="3">
    <location>
        <begin position="155"/>
        <end position="192"/>
    </location>
</feature>
<feature type="lipid moiety-binding region" description="N-myristoyl glycine" evidence="2">
    <location>
        <position position="2"/>
    </location>
</feature>
<gene>
    <name type="primary">RNF141</name>
</gene>
<comment type="function">
    <text evidence="1">May be involved in spermatogenesis.</text>
</comment>
<comment type="subcellular location">
    <subcellularLocation>
        <location evidence="2">Membrane</location>
        <topology evidence="2">Lipid-anchor</topology>
    </subcellularLocation>
</comment>
<proteinExistence type="evidence at transcript level"/>
<evidence type="ECO:0000250" key="1"/>
<evidence type="ECO:0000250" key="2">
    <source>
        <dbReference type="UniProtKB" id="Q8WVD5"/>
    </source>
</evidence>
<evidence type="ECO:0000255" key="3">
    <source>
        <dbReference type="PROSITE-ProRule" id="PRU00175"/>
    </source>
</evidence>
<name>RN141_BOVIN</name>
<sequence>MGQQISDQTQLVLNKLPEKVAKHVMLVRESGSLTYEEFLGRVAELNDVTAKVASGQEKHLLFEVQPGSDSSAFWKVVVRVVCTKINKSSGIVEASRIMNLYQFIQLYKDITSQAAGVLAQSSTSEDADENSASVTSCQASLWMGRVKQLTDEEECCICMDGRADLILPCAHSFCQKCIDKWSDRHRNCPICRLQMTGANESWVVSDAPTEDDMANYILNMADEAGQPHRP</sequence>